<reference key="1">
    <citation type="journal article" date="2005" name="J. Bacteriol.">
        <title>Whole-genome sequence analysis of Pseudomonas syringae pv. phaseolicola 1448A reveals divergence among pathovars in genes involved in virulence and transposition.</title>
        <authorList>
            <person name="Joardar V."/>
            <person name="Lindeberg M."/>
            <person name="Jackson R.W."/>
            <person name="Selengut J."/>
            <person name="Dodson R."/>
            <person name="Brinkac L.M."/>
            <person name="Daugherty S.C."/>
            <person name="DeBoy R.T."/>
            <person name="Durkin A.S."/>
            <person name="Gwinn Giglio M."/>
            <person name="Madupu R."/>
            <person name="Nelson W.C."/>
            <person name="Rosovitz M.J."/>
            <person name="Sullivan S.A."/>
            <person name="Crabtree J."/>
            <person name="Creasy T."/>
            <person name="Davidsen T.M."/>
            <person name="Haft D.H."/>
            <person name="Zafar N."/>
            <person name="Zhou L."/>
            <person name="Halpin R."/>
            <person name="Holley T."/>
            <person name="Khouri H.M."/>
            <person name="Feldblyum T.V."/>
            <person name="White O."/>
            <person name="Fraser C.M."/>
            <person name="Chatterjee A.K."/>
            <person name="Cartinhour S."/>
            <person name="Schneider D."/>
            <person name="Mansfield J.W."/>
            <person name="Collmer A."/>
            <person name="Buell R."/>
        </authorList>
    </citation>
    <scope>NUCLEOTIDE SEQUENCE [LARGE SCALE GENOMIC DNA]</scope>
    <source>
        <strain>1448A / Race 6</strain>
    </source>
</reference>
<feature type="chain" id="PRO_0000314363" description="Carboxy-S-adenosyl-L-methionine synthase">
    <location>
        <begin position="1"/>
        <end position="247"/>
    </location>
</feature>
<feature type="binding site" evidence="1">
    <location>
        <position position="40"/>
    </location>
    <ligand>
        <name>S-adenosyl-L-methionine</name>
        <dbReference type="ChEBI" id="CHEBI:59789"/>
    </ligand>
</feature>
<feature type="binding site" evidence="1">
    <location>
        <begin position="65"/>
        <end position="67"/>
    </location>
    <ligand>
        <name>S-adenosyl-L-methionine</name>
        <dbReference type="ChEBI" id="CHEBI:59789"/>
    </ligand>
</feature>
<feature type="binding site" evidence="1">
    <location>
        <begin position="90"/>
        <end position="91"/>
    </location>
    <ligand>
        <name>S-adenosyl-L-methionine</name>
        <dbReference type="ChEBI" id="CHEBI:59789"/>
    </ligand>
</feature>
<feature type="binding site" evidence="1">
    <location>
        <begin position="122"/>
        <end position="123"/>
    </location>
    <ligand>
        <name>S-adenosyl-L-methionine</name>
        <dbReference type="ChEBI" id="CHEBI:59789"/>
    </ligand>
</feature>
<feature type="binding site" evidence="1">
    <location>
        <position position="137"/>
    </location>
    <ligand>
        <name>S-adenosyl-L-methionine</name>
        <dbReference type="ChEBI" id="CHEBI:59789"/>
    </ligand>
</feature>
<feature type="binding site" evidence="1">
    <location>
        <position position="204"/>
    </location>
    <ligand>
        <name>S-adenosyl-L-methionine</name>
        <dbReference type="ChEBI" id="CHEBI:59789"/>
    </ligand>
</feature>
<proteinExistence type="inferred from homology"/>
<comment type="function">
    <text evidence="1">Catalyzes the conversion of S-adenosyl-L-methionine (SAM) to carboxy-S-adenosyl-L-methionine (Cx-SAM).</text>
</comment>
<comment type="catalytic activity">
    <reaction evidence="1">
        <text>prephenate + S-adenosyl-L-methionine = carboxy-S-adenosyl-L-methionine + 3-phenylpyruvate + H2O</text>
        <dbReference type="Rhea" id="RHEA:51692"/>
        <dbReference type="ChEBI" id="CHEBI:15377"/>
        <dbReference type="ChEBI" id="CHEBI:18005"/>
        <dbReference type="ChEBI" id="CHEBI:29934"/>
        <dbReference type="ChEBI" id="CHEBI:59789"/>
        <dbReference type="ChEBI" id="CHEBI:134278"/>
    </reaction>
</comment>
<comment type="subunit">
    <text evidence="1">Homodimer.</text>
</comment>
<comment type="similarity">
    <text evidence="1">Belongs to the class I-like SAM-binding methyltransferase superfamily. Cx-SAM synthase family.</text>
</comment>
<comment type="sequence caution" evidence="2">
    <conflict type="erroneous initiation">
        <sequence resource="EMBL-CDS" id="AAZ33635"/>
    </conflict>
</comment>
<organism>
    <name type="scientific">Pseudomonas savastanoi pv. phaseolicola (strain 1448A / Race 6)</name>
    <name type="common">Pseudomonas syringae pv. phaseolicola (strain 1448A / Race 6)</name>
    <dbReference type="NCBI Taxonomy" id="264730"/>
    <lineage>
        <taxon>Bacteria</taxon>
        <taxon>Pseudomonadati</taxon>
        <taxon>Pseudomonadota</taxon>
        <taxon>Gammaproteobacteria</taxon>
        <taxon>Pseudomonadales</taxon>
        <taxon>Pseudomonadaceae</taxon>
        <taxon>Pseudomonas</taxon>
    </lineage>
</organism>
<accession>Q48EV8</accession>
<gene>
    <name evidence="1" type="primary">cmoA</name>
    <name type="ordered locus">PSPPH_3943</name>
</gene>
<protein>
    <recommendedName>
        <fullName evidence="1">Carboxy-S-adenosyl-L-methionine synthase</fullName>
        <shortName evidence="1">Cx-SAM synthase</shortName>
        <ecNumber evidence="1">2.1.3.-</ecNumber>
    </recommendedName>
</protein>
<dbReference type="EC" id="2.1.3.-" evidence="1"/>
<dbReference type="EMBL" id="CP000058">
    <property type="protein sequence ID" value="AAZ33635.1"/>
    <property type="status" value="ALT_INIT"/>
    <property type="molecule type" value="Genomic_DNA"/>
</dbReference>
<dbReference type="RefSeq" id="WP_004658242.1">
    <property type="nucleotide sequence ID" value="NC_005773.3"/>
</dbReference>
<dbReference type="SMR" id="Q48EV8"/>
<dbReference type="KEGG" id="psp:PSPPH_3943"/>
<dbReference type="eggNOG" id="COG2226">
    <property type="taxonomic scope" value="Bacteria"/>
</dbReference>
<dbReference type="HOGENOM" id="CLU_078475_0_0_6"/>
<dbReference type="Proteomes" id="UP000000551">
    <property type="component" value="Chromosome"/>
</dbReference>
<dbReference type="GO" id="GO:0016743">
    <property type="term" value="F:carboxyl- or carbamoyltransferase activity"/>
    <property type="evidence" value="ECO:0007669"/>
    <property type="project" value="UniProtKB-UniRule"/>
</dbReference>
<dbReference type="GO" id="GO:1904047">
    <property type="term" value="F:S-adenosyl-L-methionine binding"/>
    <property type="evidence" value="ECO:0007669"/>
    <property type="project" value="UniProtKB-UniRule"/>
</dbReference>
<dbReference type="GO" id="GO:0002098">
    <property type="term" value="P:tRNA wobble uridine modification"/>
    <property type="evidence" value="ECO:0007669"/>
    <property type="project" value="InterPro"/>
</dbReference>
<dbReference type="CDD" id="cd02440">
    <property type="entry name" value="AdoMet_MTases"/>
    <property type="match status" value="1"/>
</dbReference>
<dbReference type="Gene3D" id="3.40.50.150">
    <property type="entry name" value="Vaccinia Virus protein VP39"/>
    <property type="match status" value="1"/>
</dbReference>
<dbReference type="HAMAP" id="MF_01589">
    <property type="entry name" value="Cx_SAM_synthase"/>
    <property type="match status" value="1"/>
</dbReference>
<dbReference type="InterPro" id="IPR005271">
    <property type="entry name" value="CmoA"/>
</dbReference>
<dbReference type="InterPro" id="IPR041698">
    <property type="entry name" value="Methyltransf_25"/>
</dbReference>
<dbReference type="InterPro" id="IPR029063">
    <property type="entry name" value="SAM-dependent_MTases_sf"/>
</dbReference>
<dbReference type="NCBIfam" id="TIGR00740">
    <property type="entry name" value="carboxy-S-adenosyl-L-methionine synthase CmoA"/>
    <property type="match status" value="1"/>
</dbReference>
<dbReference type="NCBIfam" id="NF011995">
    <property type="entry name" value="PRK15451.1"/>
    <property type="match status" value="1"/>
</dbReference>
<dbReference type="PANTHER" id="PTHR43861:SF2">
    <property type="entry name" value="CARBOXY-S-ADENOSYL-L-METHIONINE SYNTHASE"/>
    <property type="match status" value="1"/>
</dbReference>
<dbReference type="PANTHER" id="PTHR43861">
    <property type="entry name" value="TRANS-ACONITATE 2-METHYLTRANSFERASE-RELATED"/>
    <property type="match status" value="1"/>
</dbReference>
<dbReference type="Pfam" id="PF13649">
    <property type="entry name" value="Methyltransf_25"/>
    <property type="match status" value="1"/>
</dbReference>
<dbReference type="PIRSF" id="PIRSF006325">
    <property type="entry name" value="MeTrfase_bac"/>
    <property type="match status" value="1"/>
</dbReference>
<dbReference type="SUPFAM" id="SSF53335">
    <property type="entry name" value="S-adenosyl-L-methionine-dependent methyltransferases"/>
    <property type="match status" value="1"/>
</dbReference>
<evidence type="ECO:0000255" key="1">
    <source>
        <dbReference type="HAMAP-Rule" id="MF_01589"/>
    </source>
</evidence>
<evidence type="ECO:0000305" key="2"/>
<sequence length="247" mass="27581">MSKETDRIFAQPLAQVPDFAFNEDVVRVFPDMIKRSVPGYPTIVENLGVLAAQFAQPDTVLYDLGSSLGAVTQALRRHVRSEGCEVIAIDNSSAMVERCREYLNAQNSMFQELLPVQVIEGDILALEFKPASVVALNFTLQFIAPEQRLILLGRIRDALVPGGALILSEKLRFDDEQEHALLTDLHIAFKRANGYSDLEIAQKRSAIENVMKPDSLEEHRQRLLAAGFSKVVPWFQCLNFTSLIALP</sequence>
<name>CMOA_PSE14</name>
<keyword id="KW-0949">S-adenosyl-L-methionine</keyword>
<keyword id="KW-0808">Transferase</keyword>